<reference key="1">
    <citation type="journal article" date="2004" name="Nat. Biotechnol.">
        <title>The genome sequence of the capnophilic rumen bacterium Mannheimia succiniciproducens.</title>
        <authorList>
            <person name="Hong S.H."/>
            <person name="Kim J.S."/>
            <person name="Lee S.Y."/>
            <person name="In Y.H."/>
            <person name="Choi S.S."/>
            <person name="Rih J.-K."/>
            <person name="Kim C.H."/>
            <person name="Jeong H."/>
            <person name="Hur C.G."/>
            <person name="Kim J.J."/>
        </authorList>
    </citation>
    <scope>NUCLEOTIDE SEQUENCE [LARGE SCALE GENOMIC DNA]</scope>
    <source>
        <strain>KCTC 0769BP / MBEL55E</strain>
    </source>
</reference>
<accession>Q65UV5</accession>
<evidence type="ECO:0000255" key="1">
    <source>
        <dbReference type="HAMAP-Rule" id="MF_00246"/>
    </source>
</evidence>
<feature type="chain" id="PRO_1000005757" description="Galactokinase">
    <location>
        <begin position="1"/>
        <end position="385"/>
    </location>
</feature>
<feature type="active site" description="Proton acceptor" evidence="1">
    <location>
        <position position="174"/>
    </location>
</feature>
<feature type="binding site" evidence="1">
    <location>
        <begin position="34"/>
        <end position="37"/>
    </location>
    <ligand>
        <name>substrate</name>
    </ligand>
</feature>
<feature type="binding site" evidence="1">
    <location>
        <begin position="124"/>
        <end position="130"/>
    </location>
    <ligand>
        <name>ATP</name>
        <dbReference type="ChEBI" id="CHEBI:30616"/>
    </ligand>
</feature>
<feature type="binding site" evidence="1">
    <location>
        <position position="130"/>
    </location>
    <ligand>
        <name>Mg(2+)</name>
        <dbReference type="ChEBI" id="CHEBI:18420"/>
    </ligand>
</feature>
<feature type="binding site" evidence="1">
    <location>
        <position position="162"/>
    </location>
    <ligand>
        <name>Mg(2+)</name>
        <dbReference type="ChEBI" id="CHEBI:18420"/>
    </ligand>
</feature>
<feature type="binding site" evidence="1">
    <location>
        <position position="223"/>
    </location>
    <ligand>
        <name>substrate</name>
    </ligand>
</feature>
<feature type="site" description="Transition state stabilizer" evidence="1">
    <location>
        <position position="28"/>
    </location>
</feature>
<sequence>MQPKDLAKKLFSEKFNRTSELNVYAPGRVNIIGEHTDYNDGFVMPCAINYGTAVSGAKRDDHTFCVYAADLDQFDRFRLDRPIEQNPSEKWTGYVRGVVKFIQERCPEFTQGADLVISGNVPLSSGLSSSASLEVAVGKFCQQLGELPLSNTDIALIGQKAENKFVGANCGNMDQLISALGQQDHLLMIDCRSLETKATPVPHNIAVMIVNSHVKHDLVTGEYNTRRQQCEAAAKFFGVKALRDVSIQQFKEKEAELTALDGEAAKRARHVVTENQRVLDAVDALNQGDISRLGELMGQSHDSMRDDFEITTPEIDYLVELAQQVIGKSGGARMTGGGFGGCIVAVAPVEKVEEVRKIIADNYQKRTGIKEDFYVCTASQGVHLC</sequence>
<organism>
    <name type="scientific">Mannheimia succiniciproducens (strain KCTC 0769BP / MBEL55E)</name>
    <dbReference type="NCBI Taxonomy" id="221988"/>
    <lineage>
        <taxon>Bacteria</taxon>
        <taxon>Pseudomonadati</taxon>
        <taxon>Pseudomonadota</taxon>
        <taxon>Gammaproteobacteria</taxon>
        <taxon>Pasteurellales</taxon>
        <taxon>Pasteurellaceae</taxon>
        <taxon>Basfia</taxon>
    </lineage>
</organism>
<comment type="function">
    <text evidence="1">Catalyzes the transfer of the gamma-phosphate of ATP to D-galactose to form alpha-D-galactose-1-phosphate (Gal-1-P).</text>
</comment>
<comment type="catalytic activity">
    <reaction evidence="1">
        <text>alpha-D-galactose + ATP = alpha-D-galactose 1-phosphate + ADP + H(+)</text>
        <dbReference type="Rhea" id="RHEA:13553"/>
        <dbReference type="ChEBI" id="CHEBI:15378"/>
        <dbReference type="ChEBI" id="CHEBI:28061"/>
        <dbReference type="ChEBI" id="CHEBI:30616"/>
        <dbReference type="ChEBI" id="CHEBI:58336"/>
        <dbReference type="ChEBI" id="CHEBI:456216"/>
        <dbReference type="EC" id="2.7.1.6"/>
    </reaction>
</comment>
<comment type="pathway">
    <text evidence="1">Carbohydrate metabolism; galactose metabolism.</text>
</comment>
<comment type="subcellular location">
    <subcellularLocation>
        <location evidence="1">Cytoplasm</location>
    </subcellularLocation>
</comment>
<comment type="similarity">
    <text evidence="1">Belongs to the GHMP kinase family. GalK subfamily.</text>
</comment>
<proteinExistence type="inferred from homology"/>
<keyword id="KW-0067">ATP-binding</keyword>
<keyword id="KW-0119">Carbohydrate metabolism</keyword>
<keyword id="KW-0963">Cytoplasm</keyword>
<keyword id="KW-0299">Galactose metabolism</keyword>
<keyword id="KW-0418">Kinase</keyword>
<keyword id="KW-0460">Magnesium</keyword>
<keyword id="KW-0479">Metal-binding</keyword>
<keyword id="KW-0547">Nucleotide-binding</keyword>
<keyword id="KW-0808">Transferase</keyword>
<gene>
    <name evidence="1" type="primary">galK</name>
    <name type="ordered locus">MS0648</name>
</gene>
<protein>
    <recommendedName>
        <fullName evidence="1">Galactokinase</fullName>
        <ecNumber evidence="1">2.7.1.6</ecNumber>
    </recommendedName>
    <alternativeName>
        <fullName evidence="1">Galactose kinase</fullName>
    </alternativeName>
</protein>
<name>GAL1_MANSM</name>
<dbReference type="EC" id="2.7.1.6" evidence="1"/>
<dbReference type="EMBL" id="AE016827">
    <property type="protein sequence ID" value="AAU37255.1"/>
    <property type="molecule type" value="Genomic_DNA"/>
</dbReference>
<dbReference type="RefSeq" id="WP_011199827.1">
    <property type="nucleotide sequence ID" value="NC_006300.1"/>
</dbReference>
<dbReference type="SMR" id="Q65UV5"/>
<dbReference type="STRING" id="221988.MS0648"/>
<dbReference type="KEGG" id="msu:MS0648"/>
<dbReference type="eggNOG" id="COG0153">
    <property type="taxonomic scope" value="Bacteria"/>
</dbReference>
<dbReference type="HOGENOM" id="CLU_017814_2_1_6"/>
<dbReference type="OrthoDB" id="250531at2"/>
<dbReference type="UniPathway" id="UPA00214"/>
<dbReference type="Proteomes" id="UP000000607">
    <property type="component" value="Chromosome"/>
</dbReference>
<dbReference type="GO" id="GO:0005829">
    <property type="term" value="C:cytosol"/>
    <property type="evidence" value="ECO:0007669"/>
    <property type="project" value="TreeGrafter"/>
</dbReference>
<dbReference type="GO" id="GO:0005524">
    <property type="term" value="F:ATP binding"/>
    <property type="evidence" value="ECO:0007669"/>
    <property type="project" value="UniProtKB-UniRule"/>
</dbReference>
<dbReference type="GO" id="GO:0004335">
    <property type="term" value="F:galactokinase activity"/>
    <property type="evidence" value="ECO:0007669"/>
    <property type="project" value="UniProtKB-UniRule"/>
</dbReference>
<dbReference type="GO" id="GO:0000287">
    <property type="term" value="F:magnesium ion binding"/>
    <property type="evidence" value="ECO:0007669"/>
    <property type="project" value="UniProtKB-UniRule"/>
</dbReference>
<dbReference type="GO" id="GO:0006012">
    <property type="term" value="P:galactose metabolic process"/>
    <property type="evidence" value="ECO:0007669"/>
    <property type="project" value="UniProtKB-UniRule"/>
</dbReference>
<dbReference type="FunFam" id="3.30.230.10:FF:000017">
    <property type="entry name" value="Galactokinase"/>
    <property type="match status" value="1"/>
</dbReference>
<dbReference type="FunFam" id="3.30.70.890:FF:000001">
    <property type="entry name" value="Galactokinase"/>
    <property type="match status" value="1"/>
</dbReference>
<dbReference type="Gene3D" id="3.30.230.10">
    <property type="match status" value="1"/>
</dbReference>
<dbReference type="Gene3D" id="3.30.70.890">
    <property type="entry name" value="GHMP kinase, C-terminal domain"/>
    <property type="match status" value="1"/>
</dbReference>
<dbReference type="HAMAP" id="MF_00246">
    <property type="entry name" value="Galactokinase"/>
    <property type="match status" value="1"/>
</dbReference>
<dbReference type="InterPro" id="IPR000705">
    <property type="entry name" value="Galactokinase"/>
</dbReference>
<dbReference type="InterPro" id="IPR022963">
    <property type="entry name" value="Galactokinase_bac"/>
</dbReference>
<dbReference type="InterPro" id="IPR019741">
    <property type="entry name" value="Galactokinase_CS"/>
</dbReference>
<dbReference type="InterPro" id="IPR019539">
    <property type="entry name" value="GalKase_N"/>
</dbReference>
<dbReference type="InterPro" id="IPR013750">
    <property type="entry name" value="GHMP_kinase_C_dom"/>
</dbReference>
<dbReference type="InterPro" id="IPR036554">
    <property type="entry name" value="GHMP_kinase_C_sf"/>
</dbReference>
<dbReference type="InterPro" id="IPR006204">
    <property type="entry name" value="GHMP_kinase_N_dom"/>
</dbReference>
<dbReference type="InterPro" id="IPR006203">
    <property type="entry name" value="GHMP_knse_ATP-bd_CS"/>
</dbReference>
<dbReference type="InterPro" id="IPR006206">
    <property type="entry name" value="Mevalonate/galactokinase"/>
</dbReference>
<dbReference type="InterPro" id="IPR020568">
    <property type="entry name" value="Ribosomal_Su5_D2-typ_SF"/>
</dbReference>
<dbReference type="InterPro" id="IPR014721">
    <property type="entry name" value="Ribsml_uS5_D2-typ_fold_subgr"/>
</dbReference>
<dbReference type="NCBIfam" id="TIGR00131">
    <property type="entry name" value="gal_kin"/>
    <property type="match status" value="1"/>
</dbReference>
<dbReference type="NCBIfam" id="NF003472">
    <property type="entry name" value="PRK05101.1"/>
    <property type="match status" value="1"/>
</dbReference>
<dbReference type="PANTHER" id="PTHR10457:SF7">
    <property type="entry name" value="GALACTOKINASE-RELATED"/>
    <property type="match status" value="1"/>
</dbReference>
<dbReference type="PANTHER" id="PTHR10457">
    <property type="entry name" value="MEVALONATE KINASE/GALACTOKINASE"/>
    <property type="match status" value="1"/>
</dbReference>
<dbReference type="Pfam" id="PF10509">
    <property type="entry name" value="GalKase_gal_bdg"/>
    <property type="match status" value="1"/>
</dbReference>
<dbReference type="Pfam" id="PF08544">
    <property type="entry name" value="GHMP_kinases_C"/>
    <property type="match status" value="1"/>
</dbReference>
<dbReference type="Pfam" id="PF00288">
    <property type="entry name" value="GHMP_kinases_N"/>
    <property type="match status" value="1"/>
</dbReference>
<dbReference type="PIRSF" id="PIRSF000530">
    <property type="entry name" value="Galactokinase"/>
    <property type="match status" value="1"/>
</dbReference>
<dbReference type="PRINTS" id="PR00473">
    <property type="entry name" value="GALCTOKINASE"/>
</dbReference>
<dbReference type="PRINTS" id="PR00959">
    <property type="entry name" value="MEVGALKINASE"/>
</dbReference>
<dbReference type="SUPFAM" id="SSF55060">
    <property type="entry name" value="GHMP Kinase, C-terminal domain"/>
    <property type="match status" value="1"/>
</dbReference>
<dbReference type="SUPFAM" id="SSF54211">
    <property type="entry name" value="Ribosomal protein S5 domain 2-like"/>
    <property type="match status" value="1"/>
</dbReference>
<dbReference type="PROSITE" id="PS00106">
    <property type="entry name" value="GALACTOKINASE"/>
    <property type="match status" value="1"/>
</dbReference>
<dbReference type="PROSITE" id="PS00627">
    <property type="entry name" value="GHMP_KINASES_ATP"/>
    <property type="match status" value="1"/>
</dbReference>